<sequence>MIPGQYQIQPGDIELNDGRRTLSLAVANSGDRPIQVGSHFHFFETNDALTFDRAASRGMRLNIPAGTAVRFEPGQSREVELVDLAGLRKVYGFAGRVMGDLD</sequence>
<gene>
    <name evidence="1" type="primary">ureB</name>
    <name type="ordered locus">PSPPH_4478</name>
</gene>
<reference key="1">
    <citation type="journal article" date="2005" name="J. Bacteriol.">
        <title>Whole-genome sequence analysis of Pseudomonas syringae pv. phaseolicola 1448A reveals divergence among pathovars in genes involved in virulence and transposition.</title>
        <authorList>
            <person name="Joardar V."/>
            <person name="Lindeberg M."/>
            <person name="Jackson R.W."/>
            <person name="Selengut J."/>
            <person name="Dodson R."/>
            <person name="Brinkac L.M."/>
            <person name="Daugherty S.C."/>
            <person name="DeBoy R.T."/>
            <person name="Durkin A.S."/>
            <person name="Gwinn Giglio M."/>
            <person name="Madupu R."/>
            <person name="Nelson W.C."/>
            <person name="Rosovitz M.J."/>
            <person name="Sullivan S.A."/>
            <person name="Crabtree J."/>
            <person name="Creasy T."/>
            <person name="Davidsen T.M."/>
            <person name="Haft D.H."/>
            <person name="Zafar N."/>
            <person name="Zhou L."/>
            <person name="Halpin R."/>
            <person name="Holley T."/>
            <person name="Khouri H.M."/>
            <person name="Feldblyum T.V."/>
            <person name="White O."/>
            <person name="Fraser C.M."/>
            <person name="Chatterjee A.K."/>
            <person name="Cartinhour S."/>
            <person name="Schneider D."/>
            <person name="Mansfield J.W."/>
            <person name="Collmer A."/>
            <person name="Buell R."/>
        </authorList>
    </citation>
    <scope>NUCLEOTIDE SEQUENCE [LARGE SCALE GENOMIC DNA]</scope>
    <source>
        <strain>1448A / Race 6</strain>
    </source>
</reference>
<accession>Q48DE7</accession>
<dbReference type="EC" id="3.5.1.5" evidence="1"/>
<dbReference type="EMBL" id="CP000058">
    <property type="protein sequence ID" value="AAZ35443.1"/>
    <property type="molecule type" value="Genomic_DNA"/>
</dbReference>
<dbReference type="RefSeq" id="WP_004644206.1">
    <property type="nucleotide sequence ID" value="NC_005773.3"/>
</dbReference>
<dbReference type="SMR" id="Q48DE7"/>
<dbReference type="KEGG" id="psp:PSPPH_4478"/>
<dbReference type="eggNOG" id="COG0832">
    <property type="taxonomic scope" value="Bacteria"/>
</dbReference>
<dbReference type="HOGENOM" id="CLU_129707_1_1_6"/>
<dbReference type="UniPathway" id="UPA00258">
    <property type="reaction ID" value="UER00370"/>
</dbReference>
<dbReference type="Proteomes" id="UP000000551">
    <property type="component" value="Chromosome"/>
</dbReference>
<dbReference type="GO" id="GO:0035550">
    <property type="term" value="C:urease complex"/>
    <property type="evidence" value="ECO:0007669"/>
    <property type="project" value="InterPro"/>
</dbReference>
<dbReference type="GO" id="GO:0009039">
    <property type="term" value="F:urease activity"/>
    <property type="evidence" value="ECO:0007669"/>
    <property type="project" value="UniProtKB-UniRule"/>
</dbReference>
<dbReference type="GO" id="GO:0043419">
    <property type="term" value="P:urea catabolic process"/>
    <property type="evidence" value="ECO:0007669"/>
    <property type="project" value="UniProtKB-UniRule"/>
</dbReference>
<dbReference type="CDD" id="cd00407">
    <property type="entry name" value="Urease_beta"/>
    <property type="match status" value="1"/>
</dbReference>
<dbReference type="FunFam" id="2.10.150.10:FF:000001">
    <property type="entry name" value="Urease subunit beta"/>
    <property type="match status" value="1"/>
</dbReference>
<dbReference type="Gene3D" id="2.10.150.10">
    <property type="entry name" value="Urease, beta subunit"/>
    <property type="match status" value="1"/>
</dbReference>
<dbReference type="HAMAP" id="MF_01954">
    <property type="entry name" value="Urease_beta"/>
    <property type="match status" value="1"/>
</dbReference>
<dbReference type="InterPro" id="IPR002019">
    <property type="entry name" value="Urease_beta-like"/>
</dbReference>
<dbReference type="InterPro" id="IPR036461">
    <property type="entry name" value="Urease_betasu_sf"/>
</dbReference>
<dbReference type="InterPro" id="IPR050069">
    <property type="entry name" value="Urease_subunit"/>
</dbReference>
<dbReference type="NCBIfam" id="NF009682">
    <property type="entry name" value="PRK13203.1"/>
    <property type="match status" value="1"/>
</dbReference>
<dbReference type="NCBIfam" id="TIGR00192">
    <property type="entry name" value="urease_beta"/>
    <property type="match status" value="1"/>
</dbReference>
<dbReference type="PANTHER" id="PTHR33569">
    <property type="entry name" value="UREASE"/>
    <property type="match status" value="1"/>
</dbReference>
<dbReference type="PANTHER" id="PTHR33569:SF1">
    <property type="entry name" value="UREASE"/>
    <property type="match status" value="1"/>
</dbReference>
<dbReference type="Pfam" id="PF00699">
    <property type="entry name" value="Urease_beta"/>
    <property type="match status" value="1"/>
</dbReference>
<dbReference type="SUPFAM" id="SSF51278">
    <property type="entry name" value="Urease, beta-subunit"/>
    <property type="match status" value="1"/>
</dbReference>
<keyword id="KW-0963">Cytoplasm</keyword>
<keyword id="KW-0378">Hydrolase</keyword>
<feature type="chain" id="PRO_0000234264" description="Urease subunit beta">
    <location>
        <begin position="1"/>
        <end position="102"/>
    </location>
</feature>
<comment type="catalytic activity">
    <reaction evidence="1">
        <text>urea + 2 H2O + H(+) = hydrogencarbonate + 2 NH4(+)</text>
        <dbReference type="Rhea" id="RHEA:20557"/>
        <dbReference type="ChEBI" id="CHEBI:15377"/>
        <dbReference type="ChEBI" id="CHEBI:15378"/>
        <dbReference type="ChEBI" id="CHEBI:16199"/>
        <dbReference type="ChEBI" id="CHEBI:17544"/>
        <dbReference type="ChEBI" id="CHEBI:28938"/>
        <dbReference type="EC" id="3.5.1.5"/>
    </reaction>
</comment>
<comment type="pathway">
    <text evidence="1">Nitrogen metabolism; urea degradation; CO(2) and NH(3) from urea (urease route): step 1/1.</text>
</comment>
<comment type="subunit">
    <text evidence="1">Heterotrimer of UreA (gamma), UreB (beta) and UreC (alpha) subunits. Three heterotrimers associate to form the active enzyme.</text>
</comment>
<comment type="subcellular location">
    <subcellularLocation>
        <location evidence="1">Cytoplasm</location>
    </subcellularLocation>
</comment>
<comment type="similarity">
    <text evidence="1">Belongs to the urease beta subunit family.</text>
</comment>
<protein>
    <recommendedName>
        <fullName evidence="1">Urease subunit beta</fullName>
        <ecNumber evidence="1">3.5.1.5</ecNumber>
    </recommendedName>
    <alternativeName>
        <fullName evidence="1">Urea amidohydrolase subunit beta</fullName>
    </alternativeName>
</protein>
<proteinExistence type="inferred from homology"/>
<evidence type="ECO:0000255" key="1">
    <source>
        <dbReference type="HAMAP-Rule" id="MF_01954"/>
    </source>
</evidence>
<organism>
    <name type="scientific">Pseudomonas savastanoi pv. phaseolicola (strain 1448A / Race 6)</name>
    <name type="common">Pseudomonas syringae pv. phaseolicola (strain 1448A / Race 6)</name>
    <dbReference type="NCBI Taxonomy" id="264730"/>
    <lineage>
        <taxon>Bacteria</taxon>
        <taxon>Pseudomonadati</taxon>
        <taxon>Pseudomonadota</taxon>
        <taxon>Gammaproteobacteria</taxon>
        <taxon>Pseudomonadales</taxon>
        <taxon>Pseudomonadaceae</taxon>
        <taxon>Pseudomonas</taxon>
    </lineage>
</organism>
<name>URE2_PSE14</name>